<comment type="function">
    <text evidence="1">Component of the proteasome core, a large protease complex with broad specificity involved in protein degradation.</text>
</comment>
<comment type="catalytic activity">
    <reaction evidence="1">
        <text>Cleavage of peptide bonds with very broad specificity.</text>
        <dbReference type="EC" id="3.4.25.1"/>
    </reaction>
</comment>
<comment type="activity regulation">
    <text evidence="1">The formation of the proteasomal ATPase PAN-20S proteasome complex, via the docking of the C-termini of PAN into the intersubunit pockets in the alpha-rings, triggers opening of the gate for substrate entry. Interconversion between the open-gate and close-gate conformations leads to a dynamic regulation of the 20S proteasome proteolysis activity.</text>
</comment>
<comment type="subunit">
    <text evidence="1">The 20S proteasome core is composed of 14 alpha and 14 beta subunits that assemble into four stacked heptameric rings, resulting in a barrel-shaped structure. The two inner rings, each composed of seven catalytic beta subunits, are sandwiched by two outer rings, each composed of seven alpha subunits. The catalytic chamber with the active sites is on the inside of the barrel. Has a gated structure, the ends of the cylinder being occluded by the N-termini of the alpha-subunits. Is capped at one or both ends by the proteasome regulatory ATPase, PAN.</text>
</comment>
<comment type="subcellular location">
    <subcellularLocation>
        <location evidence="1">Cytoplasm</location>
    </subcellularLocation>
</comment>
<comment type="similarity">
    <text evidence="1">Belongs to the peptidase T1B family.</text>
</comment>
<name>PSB_METKA</name>
<gene>
    <name evidence="1" type="primary">psmB</name>
    <name type="ordered locus">MK1228</name>
</gene>
<protein>
    <recommendedName>
        <fullName evidence="1">Proteasome subunit beta</fullName>
        <ecNumber evidence="1">3.4.25.1</ecNumber>
    </recommendedName>
    <alternativeName>
        <fullName evidence="1">20S proteasome beta subunit</fullName>
    </alternativeName>
    <alternativeName>
        <fullName evidence="1">Proteasome core protein PsmB</fullName>
    </alternativeName>
</protein>
<reference key="1">
    <citation type="journal article" date="2002" name="Proc. Natl. Acad. Sci. U.S.A.">
        <title>The complete genome of hyperthermophile Methanopyrus kandleri AV19 and monophyly of archaeal methanogens.</title>
        <authorList>
            <person name="Slesarev A.I."/>
            <person name="Mezhevaya K.V."/>
            <person name="Makarova K.S."/>
            <person name="Polushin N.N."/>
            <person name="Shcherbinina O.V."/>
            <person name="Shakhova V.V."/>
            <person name="Belova G.I."/>
            <person name="Aravind L."/>
            <person name="Natale D.A."/>
            <person name="Rogozin I.B."/>
            <person name="Tatusov R.L."/>
            <person name="Wolf Y.I."/>
            <person name="Stetter K.O."/>
            <person name="Malykh A.G."/>
            <person name="Koonin E.V."/>
            <person name="Kozyavkin S.A."/>
        </authorList>
    </citation>
    <scope>NUCLEOTIDE SEQUENCE [LARGE SCALE GENOMIC DNA]</scope>
    <source>
        <strain>AV19 / DSM 6324 / JCM 9639 / NBRC 100938</strain>
    </source>
</reference>
<accession>Q8TW10</accession>
<sequence>MKELDQLTKGTTTVGILADKGVVLAADRRAVMGNLIAGKQVKKIFRIHDYIGVTTAGSVADAQKIVDLMRAEARLYELRHNRMISARALANMISHVLHSSLKAFRPYLVQLIVGGFNDDDPALYNLDPSGSIIEEDYTATGSGSPTAYGVLEAEYEEGMSLDDAIEVAVRAVKSALERDTGTGEGVTVVTITREEGYRELPEEEVEKLLS</sequence>
<dbReference type="EC" id="3.4.25.1" evidence="1"/>
<dbReference type="EMBL" id="AE009439">
    <property type="protein sequence ID" value="AAM02441.1"/>
    <property type="molecule type" value="Genomic_DNA"/>
</dbReference>
<dbReference type="RefSeq" id="WP_011019596.1">
    <property type="nucleotide sequence ID" value="NC_003551.1"/>
</dbReference>
<dbReference type="SMR" id="Q8TW10"/>
<dbReference type="FunCoup" id="Q8TW10">
    <property type="interactions" value="126"/>
</dbReference>
<dbReference type="STRING" id="190192.MK1228"/>
<dbReference type="MEROPS" id="T01.002"/>
<dbReference type="PaxDb" id="190192-MK1228"/>
<dbReference type="EnsemblBacteria" id="AAM02441">
    <property type="protein sequence ID" value="AAM02441"/>
    <property type="gene ID" value="MK1228"/>
</dbReference>
<dbReference type="GeneID" id="1477823"/>
<dbReference type="KEGG" id="mka:MK1228"/>
<dbReference type="PATRIC" id="fig|190192.8.peg.1331"/>
<dbReference type="HOGENOM" id="CLU_035750_7_2_2"/>
<dbReference type="InParanoid" id="Q8TW10"/>
<dbReference type="OrthoDB" id="6330at2157"/>
<dbReference type="Proteomes" id="UP000001826">
    <property type="component" value="Chromosome"/>
</dbReference>
<dbReference type="GO" id="GO:0005737">
    <property type="term" value="C:cytoplasm"/>
    <property type="evidence" value="ECO:0007669"/>
    <property type="project" value="UniProtKB-SubCell"/>
</dbReference>
<dbReference type="GO" id="GO:0019774">
    <property type="term" value="C:proteasome core complex, beta-subunit complex"/>
    <property type="evidence" value="ECO:0007669"/>
    <property type="project" value="UniProtKB-UniRule"/>
</dbReference>
<dbReference type="GO" id="GO:0004298">
    <property type="term" value="F:threonine-type endopeptidase activity"/>
    <property type="evidence" value="ECO:0007669"/>
    <property type="project" value="UniProtKB-UniRule"/>
</dbReference>
<dbReference type="GO" id="GO:0010498">
    <property type="term" value="P:proteasomal protein catabolic process"/>
    <property type="evidence" value="ECO:0007669"/>
    <property type="project" value="UniProtKB-UniRule"/>
</dbReference>
<dbReference type="CDD" id="cd03764">
    <property type="entry name" value="proteasome_beta_archeal"/>
    <property type="match status" value="1"/>
</dbReference>
<dbReference type="FunFam" id="3.60.20.10:FF:000049">
    <property type="entry name" value="Proteasome subunit beta"/>
    <property type="match status" value="1"/>
</dbReference>
<dbReference type="Gene3D" id="3.60.20.10">
    <property type="entry name" value="Glutamine Phosphoribosylpyrophosphate, subunit 1, domain 1"/>
    <property type="match status" value="1"/>
</dbReference>
<dbReference type="HAMAP" id="MF_02113_A">
    <property type="entry name" value="Proteasome_B_A"/>
    <property type="match status" value="1"/>
</dbReference>
<dbReference type="InterPro" id="IPR029055">
    <property type="entry name" value="Ntn_hydrolases_N"/>
</dbReference>
<dbReference type="InterPro" id="IPR019983">
    <property type="entry name" value="Pept_T1A_Psome_bsu_arc"/>
</dbReference>
<dbReference type="InterPro" id="IPR000243">
    <property type="entry name" value="Pept_T1A_subB"/>
</dbReference>
<dbReference type="InterPro" id="IPR016050">
    <property type="entry name" value="Proteasome_bsu_CS"/>
</dbReference>
<dbReference type="InterPro" id="IPR001353">
    <property type="entry name" value="Proteasome_sua/b"/>
</dbReference>
<dbReference type="InterPro" id="IPR023333">
    <property type="entry name" value="Proteasome_suB-type"/>
</dbReference>
<dbReference type="NCBIfam" id="TIGR03634">
    <property type="entry name" value="arc_protsome_B"/>
    <property type="match status" value="1"/>
</dbReference>
<dbReference type="PANTHER" id="PTHR32194:SF0">
    <property type="entry name" value="ATP-DEPENDENT PROTEASE SUBUNIT HSLV"/>
    <property type="match status" value="1"/>
</dbReference>
<dbReference type="PANTHER" id="PTHR32194">
    <property type="entry name" value="METALLOPROTEASE TLDD"/>
    <property type="match status" value="1"/>
</dbReference>
<dbReference type="Pfam" id="PF00227">
    <property type="entry name" value="Proteasome"/>
    <property type="match status" value="1"/>
</dbReference>
<dbReference type="PRINTS" id="PR00141">
    <property type="entry name" value="PROTEASOME"/>
</dbReference>
<dbReference type="SUPFAM" id="SSF56235">
    <property type="entry name" value="N-terminal nucleophile aminohydrolases (Ntn hydrolases)"/>
    <property type="match status" value="1"/>
</dbReference>
<dbReference type="PROSITE" id="PS00854">
    <property type="entry name" value="PROTEASOME_BETA_1"/>
    <property type="match status" value="1"/>
</dbReference>
<dbReference type="PROSITE" id="PS51476">
    <property type="entry name" value="PROTEASOME_BETA_2"/>
    <property type="match status" value="1"/>
</dbReference>
<proteinExistence type="inferred from homology"/>
<feature type="propeptide" id="PRO_0000397362" description="Removed in mature form; by autocatalysis" evidence="1">
    <location>
        <begin position="1"/>
        <end position="10"/>
    </location>
</feature>
<feature type="chain" id="PRO_0000397363" description="Proteasome subunit beta">
    <location>
        <begin position="11"/>
        <end position="210"/>
    </location>
</feature>
<feature type="active site" description="Nucleophile" evidence="1">
    <location>
        <position position="11"/>
    </location>
</feature>
<organism>
    <name type="scientific">Methanopyrus kandleri (strain AV19 / DSM 6324 / JCM 9639 / NBRC 100938)</name>
    <dbReference type="NCBI Taxonomy" id="190192"/>
    <lineage>
        <taxon>Archaea</taxon>
        <taxon>Methanobacteriati</taxon>
        <taxon>Methanobacteriota</taxon>
        <taxon>Methanomada group</taxon>
        <taxon>Methanopyri</taxon>
        <taxon>Methanopyrales</taxon>
        <taxon>Methanopyraceae</taxon>
        <taxon>Methanopyrus</taxon>
    </lineage>
</organism>
<evidence type="ECO:0000255" key="1">
    <source>
        <dbReference type="HAMAP-Rule" id="MF_02113"/>
    </source>
</evidence>
<keyword id="KW-0068">Autocatalytic cleavage</keyword>
<keyword id="KW-0963">Cytoplasm</keyword>
<keyword id="KW-0378">Hydrolase</keyword>
<keyword id="KW-0645">Protease</keyword>
<keyword id="KW-0647">Proteasome</keyword>
<keyword id="KW-1185">Reference proteome</keyword>
<keyword id="KW-0888">Threonine protease</keyword>
<keyword id="KW-0865">Zymogen</keyword>